<keyword id="KW-0472">Membrane</keyword>
<keyword id="KW-1185">Reference proteome</keyword>
<keyword id="KW-0812">Transmembrane</keyword>
<keyword id="KW-1133">Transmembrane helix</keyword>
<proteinExistence type="evidence at transcript level"/>
<name>TMM69_MOUSE</name>
<organism>
    <name type="scientific">Mus musculus</name>
    <name type="common">Mouse</name>
    <dbReference type="NCBI Taxonomy" id="10090"/>
    <lineage>
        <taxon>Eukaryota</taxon>
        <taxon>Metazoa</taxon>
        <taxon>Chordata</taxon>
        <taxon>Craniata</taxon>
        <taxon>Vertebrata</taxon>
        <taxon>Euteleostomi</taxon>
        <taxon>Mammalia</taxon>
        <taxon>Eutheria</taxon>
        <taxon>Euarchontoglires</taxon>
        <taxon>Glires</taxon>
        <taxon>Rodentia</taxon>
        <taxon>Myomorpha</taxon>
        <taxon>Muroidea</taxon>
        <taxon>Muridae</taxon>
        <taxon>Murinae</taxon>
        <taxon>Mus</taxon>
        <taxon>Mus</taxon>
    </lineage>
</organism>
<feature type="chain" id="PRO_0000282851" description="Transmembrane protein 69">
    <location>
        <begin position="1"/>
        <end position="245"/>
    </location>
</feature>
<feature type="transmembrane region" description="Helical" evidence="1">
    <location>
        <begin position="97"/>
        <end position="117"/>
    </location>
</feature>
<feature type="transmembrane region" description="Helical" evidence="1">
    <location>
        <begin position="122"/>
        <end position="142"/>
    </location>
</feature>
<feature type="transmembrane region" description="Helical" evidence="1">
    <location>
        <begin position="159"/>
        <end position="179"/>
    </location>
</feature>
<feature type="transmembrane region" description="Helical" evidence="1">
    <location>
        <begin position="185"/>
        <end position="205"/>
    </location>
</feature>
<feature type="transmembrane region" description="Helical" evidence="1">
    <location>
        <begin position="216"/>
        <end position="236"/>
    </location>
</feature>
<feature type="sequence conflict" description="In Ref. 3; AAI06179." evidence="2" ref="3">
    <original>G</original>
    <variation>S</variation>
    <location>
        <position position="27"/>
    </location>
</feature>
<gene>
    <name type="primary">Tmem69</name>
</gene>
<reference key="1">
    <citation type="journal article" date="2005" name="Science">
        <title>The transcriptional landscape of the mammalian genome.</title>
        <authorList>
            <person name="Carninci P."/>
            <person name="Kasukawa T."/>
            <person name="Katayama S."/>
            <person name="Gough J."/>
            <person name="Frith M.C."/>
            <person name="Maeda N."/>
            <person name="Oyama R."/>
            <person name="Ravasi T."/>
            <person name="Lenhard B."/>
            <person name="Wells C."/>
            <person name="Kodzius R."/>
            <person name="Shimokawa K."/>
            <person name="Bajic V.B."/>
            <person name="Brenner S.E."/>
            <person name="Batalov S."/>
            <person name="Forrest A.R."/>
            <person name="Zavolan M."/>
            <person name="Davis M.J."/>
            <person name="Wilming L.G."/>
            <person name="Aidinis V."/>
            <person name="Allen J.E."/>
            <person name="Ambesi-Impiombato A."/>
            <person name="Apweiler R."/>
            <person name="Aturaliya R.N."/>
            <person name="Bailey T.L."/>
            <person name="Bansal M."/>
            <person name="Baxter L."/>
            <person name="Beisel K.W."/>
            <person name="Bersano T."/>
            <person name="Bono H."/>
            <person name="Chalk A.M."/>
            <person name="Chiu K.P."/>
            <person name="Choudhary V."/>
            <person name="Christoffels A."/>
            <person name="Clutterbuck D.R."/>
            <person name="Crowe M.L."/>
            <person name="Dalla E."/>
            <person name="Dalrymple B.P."/>
            <person name="de Bono B."/>
            <person name="Della Gatta G."/>
            <person name="di Bernardo D."/>
            <person name="Down T."/>
            <person name="Engstrom P."/>
            <person name="Fagiolini M."/>
            <person name="Faulkner G."/>
            <person name="Fletcher C.F."/>
            <person name="Fukushima T."/>
            <person name="Furuno M."/>
            <person name="Futaki S."/>
            <person name="Gariboldi M."/>
            <person name="Georgii-Hemming P."/>
            <person name="Gingeras T.R."/>
            <person name="Gojobori T."/>
            <person name="Green R.E."/>
            <person name="Gustincich S."/>
            <person name="Harbers M."/>
            <person name="Hayashi Y."/>
            <person name="Hensch T.K."/>
            <person name="Hirokawa N."/>
            <person name="Hill D."/>
            <person name="Huminiecki L."/>
            <person name="Iacono M."/>
            <person name="Ikeo K."/>
            <person name="Iwama A."/>
            <person name="Ishikawa T."/>
            <person name="Jakt M."/>
            <person name="Kanapin A."/>
            <person name="Katoh M."/>
            <person name="Kawasawa Y."/>
            <person name="Kelso J."/>
            <person name="Kitamura H."/>
            <person name="Kitano H."/>
            <person name="Kollias G."/>
            <person name="Krishnan S.P."/>
            <person name="Kruger A."/>
            <person name="Kummerfeld S.K."/>
            <person name="Kurochkin I.V."/>
            <person name="Lareau L.F."/>
            <person name="Lazarevic D."/>
            <person name="Lipovich L."/>
            <person name="Liu J."/>
            <person name="Liuni S."/>
            <person name="McWilliam S."/>
            <person name="Madan Babu M."/>
            <person name="Madera M."/>
            <person name="Marchionni L."/>
            <person name="Matsuda H."/>
            <person name="Matsuzawa S."/>
            <person name="Miki H."/>
            <person name="Mignone F."/>
            <person name="Miyake S."/>
            <person name="Morris K."/>
            <person name="Mottagui-Tabar S."/>
            <person name="Mulder N."/>
            <person name="Nakano N."/>
            <person name="Nakauchi H."/>
            <person name="Ng P."/>
            <person name="Nilsson R."/>
            <person name="Nishiguchi S."/>
            <person name="Nishikawa S."/>
            <person name="Nori F."/>
            <person name="Ohara O."/>
            <person name="Okazaki Y."/>
            <person name="Orlando V."/>
            <person name="Pang K.C."/>
            <person name="Pavan W.J."/>
            <person name="Pavesi G."/>
            <person name="Pesole G."/>
            <person name="Petrovsky N."/>
            <person name="Piazza S."/>
            <person name="Reed J."/>
            <person name="Reid J.F."/>
            <person name="Ring B.Z."/>
            <person name="Ringwald M."/>
            <person name="Rost B."/>
            <person name="Ruan Y."/>
            <person name="Salzberg S.L."/>
            <person name="Sandelin A."/>
            <person name="Schneider C."/>
            <person name="Schoenbach C."/>
            <person name="Sekiguchi K."/>
            <person name="Semple C.A."/>
            <person name="Seno S."/>
            <person name="Sessa L."/>
            <person name="Sheng Y."/>
            <person name="Shibata Y."/>
            <person name="Shimada H."/>
            <person name="Shimada K."/>
            <person name="Silva D."/>
            <person name="Sinclair B."/>
            <person name="Sperling S."/>
            <person name="Stupka E."/>
            <person name="Sugiura K."/>
            <person name="Sultana R."/>
            <person name="Takenaka Y."/>
            <person name="Taki K."/>
            <person name="Tammoja K."/>
            <person name="Tan S.L."/>
            <person name="Tang S."/>
            <person name="Taylor M.S."/>
            <person name="Tegner J."/>
            <person name="Teichmann S.A."/>
            <person name="Ueda H.R."/>
            <person name="van Nimwegen E."/>
            <person name="Verardo R."/>
            <person name="Wei C.L."/>
            <person name="Yagi K."/>
            <person name="Yamanishi H."/>
            <person name="Zabarovsky E."/>
            <person name="Zhu S."/>
            <person name="Zimmer A."/>
            <person name="Hide W."/>
            <person name="Bult C."/>
            <person name="Grimmond S.M."/>
            <person name="Teasdale R.D."/>
            <person name="Liu E.T."/>
            <person name="Brusic V."/>
            <person name="Quackenbush J."/>
            <person name="Wahlestedt C."/>
            <person name="Mattick J.S."/>
            <person name="Hume D.A."/>
            <person name="Kai C."/>
            <person name="Sasaki D."/>
            <person name="Tomaru Y."/>
            <person name="Fukuda S."/>
            <person name="Kanamori-Katayama M."/>
            <person name="Suzuki M."/>
            <person name="Aoki J."/>
            <person name="Arakawa T."/>
            <person name="Iida J."/>
            <person name="Imamura K."/>
            <person name="Itoh M."/>
            <person name="Kato T."/>
            <person name="Kawaji H."/>
            <person name="Kawagashira N."/>
            <person name="Kawashima T."/>
            <person name="Kojima M."/>
            <person name="Kondo S."/>
            <person name="Konno H."/>
            <person name="Nakano K."/>
            <person name="Ninomiya N."/>
            <person name="Nishio T."/>
            <person name="Okada M."/>
            <person name="Plessy C."/>
            <person name="Shibata K."/>
            <person name="Shiraki T."/>
            <person name="Suzuki S."/>
            <person name="Tagami M."/>
            <person name="Waki K."/>
            <person name="Watahiki A."/>
            <person name="Okamura-Oho Y."/>
            <person name="Suzuki H."/>
            <person name="Kawai J."/>
            <person name="Hayashizaki Y."/>
        </authorList>
    </citation>
    <scope>NUCLEOTIDE SEQUENCE [LARGE SCALE MRNA]</scope>
    <source>
        <strain>C57BL/6J</strain>
        <tissue>Thymus</tissue>
    </source>
</reference>
<reference key="2">
    <citation type="journal article" date="2009" name="PLoS Biol.">
        <title>Lineage-specific biology revealed by a finished genome assembly of the mouse.</title>
        <authorList>
            <person name="Church D.M."/>
            <person name="Goodstadt L."/>
            <person name="Hillier L.W."/>
            <person name="Zody M.C."/>
            <person name="Goldstein S."/>
            <person name="She X."/>
            <person name="Bult C.J."/>
            <person name="Agarwala R."/>
            <person name="Cherry J.L."/>
            <person name="DiCuccio M."/>
            <person name="Hlavina W."/>
            <person name="Kapustin Y."/>
            <person name="Meric P."/>
            <person name="Maglott D."/>
            <person name="Birtle Z."/>
            <person name="Marques A.C."/>
            <person name="Graves T."/>
            <person name="Zhou S."/>
            <person name="Teague B."/>
            <person name="Potamousis K."/>
            <person name="Churas C."/>
            <person name="Place M."/>
            <person name="Herschleb J."/>
            <person name="Runnheim R."/>
            <person name="Forrest D."/>
            <person name="Amos-Landgraf J."/>
            <person name="Schwartz D.C."/>
            <person name="Cheng Z."/>
            <person name="Lindblad-Toh K."/>
            <person name="Eichler E.E."/>
            <person name="Ponting C.P."/>
        </authorList>
    </citation>
    <scope>NUCLEOTIDE SEQUENCE [LARGE SCALE GENOMIC DNA]</scope>
    <source>
        <strain>C57BL/6J</strain>
    </source>
</reference>
<reference key="3">
    <citation type="journal article" date="2004" name="Genome Res.">
        <title>The status, quality, and expansion of the NIH full-length cDNA project: the Mammalian Gene Collection (MGC).</title>
        <authorList>
            <consortium name="The MGC Project Team"/>
        </authorList>
    </citation>
    <scope>NUCLEOTIDE SEQUENCE [LARGE SCALE MRNA]</scope>
    <source>
        <tissue>Limb</tissue>
    </source>
</reference>
<evidence type="ECO:0000255" key="1"/>
<evidence type="ECO:0000305" key="2"/>
<sequence>MLHFIQKVSGASSKMLKNPFTVRLGAGRIDILSLKTCLLQNFSSLPPRTWLSPSFQVCMRKIQCYHVSPCNFKKQKAVLPPKKRSTITYLLDSPKPALYITLAGLIPFTAPPLLMVITKSYIPVLAFTQMAYGAGFLAFLGGIRWGFVLPESSPAKPDYINLASSMSPILFSWAAILFSERLNEAIVTLIIGLGIALHNELFLLPHYPNWFKALRIVSTLVAFISFVVTLILENIYPEKGPKRPD</sequence>
<comment type="subcellular location">
    <subcellularLocation>
        <location evidence="2">Membrane</location>
        <topology evidence="2">Multi-pass membrane protein</topology>
    </subcellularLocation>
</comment>
<comment type="sequence caution" evidence="2">
    <conflict type="miscellaneous discrepancy">
        <sequence resource="EMBL-CDS" id="BAC31112"/>
    </conflict>
    <text>Cloning artifact.</text>
</comment>
<accession>Q3KQJ0</accession>
<accession>A2ACZ7</accession>
<accession>Q8C9K2</accession>
<protein>
    <recommendedName>
        <fullName>Transmembrane protein 69</fullName>
    </recommendedName>
</protein>
<dbReference type="EMBL" id="AK041960">
    <property type="protein sequence ID" value="BAC31112.1"/>
    <property type="status" value="ALT_SEQ"/>
    <property type="molecule type" value="mRNA"/>
</dbReference>
<dbReference type="EMBL" id="AL669953">
    <property type="status" value="NOT_ANNOTATED_CDS"/>
    <property type="molecule type" value="Genomic_DNA"/>
</dbReference>
<dbReference type="EMBL" id="BC106178">
    <property type="protein sequence ID" value="AAI06179.1"/>
    <property type="molecule type" value="mRNA"/>
</dbReference>
<dbReference type="CCDS" id="CCDS51277.1"/>
<dbReference type="RefSeq" id="NP_808338.2">
    <property type="nucleotide sequence ID" value="NM_177670.4"/>
</dbReference>
<dbReference type="RefSeq" id="XP_006503070.1">
    <property type="nucleotide sequence ID" value="XM_006503007.5"/>
</dbReference>
<dbReference type="FunCoup" id="Q3KQJ0">
    <property type="interactions" value="25"/>
</dbReference>
<dbReference type="STRING" id="10090.ENSMUSP00000102087"/>
<dbReference type="PhosphoSitePlus" id="Q3KQJ0"/>
<dbReference type="PaxDb" id="10090-ENSMUSP00000065821"/>
<dbReference type="ProteomicsDB" id="259039"/>
<dbReference type="Antibodypedia" id="32710">
    <property type="antibodies" value="27 antibodies from 15 providers"/>
</dbReference>
<dbReference type="Ensembl" id="ENSMUST00000069674.6">
    <property type="protein sequence ID" value="ENSMUSP00000065821.6"/>
    <property type="gene ID" value="ENSMUSG00000055900.16"/>
</dbReference>
<dbReference type="GeneID" id="230657"/>
<dbReference type="KEGG" id="mmu:230657"/>
<dbReference type="UCSC" id="uc012djj.1">
    <property type="organism name" value="mouse"/>
</dbReference>
<dbReference type="AGR" id="MGI:3045357"/>
<dbReference type="CTD" id="51249"/>
<dbReference type="MGI" id="MGI:3045357">
    <property type="gene designation" value="Tmem69"/>
</dbReference>
<dbReference type="VEuPathDB" id="HostDB:ENSMUSG00000055900"/>
<dbReference type="eggNOG" id="ENOG502RYSE">
    <property type="taxonomic scope" value="Eukaryota"/>
</dbReference>
<dbReference type="GeneTree" id="ENSGT00390000015318"/>
<dbReference type="HOGENOM" id="CLU_095371_0_0_1"/>
<dbReference type="InParanoid" id="Q3KQJ0"/>
<dbReference type="OMA" id="KHLWEGP"/>
<dbReference type="OrthoDB" id="194289at2759"/>
<dbReference type="PhylomeDB" id="Q3KQJ0"/>
<dbReference type="TreeFam" id="TF336126"/>
<dbReference type="BioGRID-ORCS" id="230657">
    <property type="hits" value="4 hits in 78 CRISPR screens"/>
</dbReference>
<dbReference type="PRO" id="PR:Q3KQJ0"/>
<dbReference type="Proteomes" id="UP000000589">
    <property type="component" value="Chromosome 4"/>
</dbReference>
<dbReference type="RNAct" id="Q3KQJ0">
    <property type="molecule type" value="protein"/>
</dbReference>
<dbReference type="Bgee" id="ENSMUSG00000055900">
    <property type="expression patterns" value="Expressed in manus and 224 other cell types or tissues"/>
</dbReference>
<dbReference type="GO" id="GO:0016020">
    <property type="term" value="C:membrane"/>
    <property type="evidence" value="ECO:0007669"/>
    <property type="project" value="UniProtKB-SubCell"/>
</dbReference>
<dbReference type="InterPro" id="IPR021836">
    <property type="entry name" value="DUF3429"/>
</dbReference>
<dbReference type="PANTHER" id="PTHR15887">
    <property type="entry name" value="TRANSMEMBRANE PROTEIN 69"/>
    <property type="match status" value="1"/>
</dbReference>
<dbReference type="PANTHER" id="PTHR15887:SF1">
    <property type="entry name" value="TRANSMEMBRANE PROTEIN 69"/>
    <property type="match status" value="1"/>
</dbReference>
<dbReference type="Pfam" id="PF11911">
    <property type="entry name" value="DUF3429"/>
    <property type="match status" value="1"/>
</dbReference>